<comment type="subcellular location">
    <subcellularLocation>
        <location evidence="5">Cell membrane</location>
        <topology evidence="5">Single-pass membrane protein</topology>
    </subcellularLocation>
</comment>
<comment type="similarity">
    <text evidence="5">Belongs to the peptidase S41A family.</text>
</comment>
<protein>
    <recommendedName>
        <fullName>Probable CtpA-like serine protease</fullName>
        <ecNumber>3.4.21.-</ecNumber>
    </recommendedName>
</protein>
<dbReference type="EC" id="3.4.21.-"/>
<dbReference type="EMBL" id="CP000029">
    <property type="protein sequence ID" value="AAW54358.1"/>
    <property type="molecule type" value="Genomic_DNA"/>
</dbReference>
<dbReference type="RefSeq" id="WP_002486217.1">
    <property type="nucleotide sequence ID" value="NC_002976.3"/>
</dbReference>
<dbReference type="SMR" id="Q5HPB7"/>
<dbReference type="STRING" id="176279.SERP0996"/>
<dbReference type="KEGG" id="ser:SERP0996"/>
<dbReference type="eggNOG" id="COG0793">
    <property type="taxonomic scope" value="Bacteria"/>
</dbReference>
<dbReference type="HOGENOM" id="CLU_017295_3_0_9"/>
<dbReference type="Proteomes" id="UP000000531">
    <property type="component" value="Chromosome"/>
</dbReference>
<dbReference type="GO" id="GO:0030288">
    <property type="term" value="C:outer membrane-bounded periplasmic space"/>
    <property type="evidence" value="ECO:0007669"/>
    <property type="project" value="TreeGrafter"/>
</dbReference>
<dbReference type="GO" id="GO:0005886">
    <property type="term" value="C:plasma membrane"/>
    <property type="evidence" value="ECO:0007669"/>
    <property type="project" value="UniProtKB-SubCell"/>
</dbReference>
<dbReference type="GO" id="GO:0004175">
    <property type="term" value="F:endopeptidase activity"/>
    <property type="evidence" value="ECO:0007669"/>
    <property type="project" value="TreeGrafter"/>
</dbReference>
<dbReference type="GO" id="GO:0008236">
    <property type="term" value="F:serine-type peptidase activity"/>
    <property type="evidence" value="ECO:0007669"/>
    <property type="project" value="UniProtKB-KW"/>
</dbReference>
<dbReference type="GO" id="GO:0006508">
    <property type="term" value="P:proteolysis"/>
    <property type="evidence" value="ECO:0007669"/>
    <property type="project" value="UniProtKB-KW"/>
</dbReference>
<dbReference type="GO" id="GO:0007165">
    <property type="term" value="P:signal transduction"/>
    <property type="evidence" value="ECO:0007669"/>
    <property type="project" value="TreeGrafter"/>
</dbReference>
<dbReference type="CDD" id="cd06782">
    <property type="entry name" value="cpPDZ_CPP-like"/>
    <property type="match status" value="1"/>
</dbReference>
<dbReference type="CDD" id="cd07560">
    <property type="entry name" value="Peptidase_S41_CPP"/>
    <property type="match status" value="1"/>
</dbReference>
<dbReference type="FunFam" id="2.30.42.10:FF:000063">
    <property type="entry name" value="Peptidase, S41 family"/>
    <property type="match status" value="1"/>
</dbReference>
<dbReference type="FunFam" id="3.30.750.44:FF:000001">
    <property type="entry name" value="S41 family peptidase"/>
    <property type="match status" value="1"/>
</dbReference>
<dbReference type="Gene3D" id="2.30.42.10">
    <property type="match status" value="1"/>
</dbReference>
<dbReference type="Gene3D" id="3.30.750.44">
    <property type="match status" value="1"/>
</dbReference>
<dbReference type="Gene3D" id="3.90.226.10">
    <property type="entry name" value="2-enoyl-CoA Hydratase, Chain A, domain 1"/>
    <property type="match status" value="1"/>
</dbReference>
<dbReference type="Gene3D" id="1.10.101.10">
    <property type="entry name" value="PGBD-like superfamily/PGBD"/>
    <property type="match status" value="1"/>
</dbReference>
<dbReference type="InterPro" id="IPR029045">
    <property type="entry name" value="ClpP/crotonase-like_dom_sf"/>
</dbReference>
<dbReference type="InterPro" id="IPR055210">
    <property type="entry name" value="CtpA/B_N"/>
</dbReference>
<dbReference type="InterPro" id="IPR001478">
    <property type="entry name" value="PDZ"/>
</dbReference>
<dbReference type="InterPro" id="IPR041489">
    <property type="entry name" value="PDZ_6"/>
</dbReference>
<dbReference type="InterPro" id="IPR036034">
    <property type="entry name" value="PDZ_sf"/>
</dbReference>
<dbReference type="InterPro" id="IPR004447">
    <property type="entry name" value="Peptidase_S41A"/>
</dbReference>
<dbReference type="InterPro" id="IPR002477">
    <property type="entry name" value="Peptidoglycan-bd-like"/>
</dbReference>
<dbReference type="InterPro" id="IPR036365">
    <property type="entry name" value="PGBD-like_sf"/>
</dbReference>
<dbReference type="InterPro" id="IPR036366">
    <property type="entry name" value="PGBDSf"/>
</dbReference>
<dbReference type="InterPro" id="IPR005151">
    <property type="entry name" value="Tail-specific_protease"/>
</dbReference>
<dbReference type="NCBIfam" id="TIGR00225">
    <property type="entry name" value="prc"/>
    <property type="match status" value="1"/>
</dbReference>
<dbReference type="PANTHER" id="PTHR32060:SF30">
    <property type="entry name" value="CARBOXY-TERMINAL PROCESSING PROTEASE CTPA"/>
    <property type="match status" value="1"/>
</dbReference>
<dbReference type="PANTHER" id="PTHR32060">
    <property type="entry name" value="TAIL-SPECIFIC PROTEASE"/>
    <property type="match status" value="1"/>
</dbReference>
<dbReference type="Pfam" id="PF22694">
    <property type="entry name" value="CtpB_N-like"/>
    <property type="match status" value="1"/>
</dbReference>
<dbReference type="Pfam" id="PF17820">
    <property type="entry name" value="PDZ_6"/>
    <property type="match status" value="1"/>
</dbReference>
<dbReference type="Pfam" id="PF03572">
    <property type="entry name" value="Peptidase_S41"/>
    <property type="match status" value="1"/>
</dbReference>
<dbReference type="Pfam" id="PF01471">
    <property type="entry name" value="PG_binding_1"/>
    <property type="match status" value="1"/>
</dbReference>
<dbReference type="SMART" id="SM00228">
    <property type="entry name" value="PDZ"/>
    <property type="match status" value="1"/>
</dbReference>
<dbReference type="SMART" id="SM00245">
    <property type="entry name" value="TSPc"/>
    <property type="match status" value="1"/>
</dbReference>
<dbReference type="SUPFAM" id="SSF52096">
    <property type="entry name" value="ClpP/crotonase"/>
    <property type="match status" value="1"/>
</dbReference>
<dbReference type="SUPFAM" id="SSF50156">
    <property type="entry name" value="PDZ domain-like"/>
    <property type="match status" value="1"/>
</dbReference>
<dbReference type="SUPFAM" id="SSF47090">
    <property type="entry name" value="PGBD-like"/>
    <property type="match status" value="1"/>
</dbReference>
<dbReference type="PROSITE" id="PS50106">
    <property type="entry name" value="PDZ"/>
    <property type="match status" value="1"/>
</dbReference>
<evidence type="ECO:0000250" key="1"/>
<evidence type="ECO:0000255" key="2"/>
<evidence type="ECO:0000255" key="3">
    <source>
        <dbReference type="PROSITE-ProRule" id="PRU00143"/>
    </source>
</evidence>
<evidence type="ECO:0000256" key="4">
    <source>
        <dbReference type="SAM" id="MobiDB-lite"/>
    </source>
</evidence>
<evidence type="ECO:0000305" key="5"/>
<keyword id="KW-1003">Cell membrane</keyword>
<keyword id="KW-0378">Hydrolase</keyword>
<keyword id="KW-0472">Membrane</keyword>
<keyword id="KW-0645">Protease</keyword>
<keyword id="KW-1185">Reference proteome</keyword>
<keyword id="KW-0720">Serine protease</keyword>
<keyword id="KW-0812">Transmembrane</keyword>
<keyword id="KW-1133">Transmembrane helix</keyword>
<reference key="1">
    <citation type="journal article" date="2005" name="J. Bacteriol.">
        <title>Insights on evolution of virulence and resistance from the complete genome analysis of an early methicillin-resistant Staphylococcus aureus strain and a biofilm-producing methicillin-resistant Staphylococcus epidermidis strain.</title>
        <authorList>
            <person name="Gill S.R."/>
            <person name="Fouts D.E."/>
            <person name="Archer G.L."/>
            <person name="Mongodin E.F."/>
            <person name="DeBoy R.T."/>
            <person name="Ravel J."/>
            <person name="Paulsen I.T."/>
            <person name="Kolonay J.F."/>
            <person name="Brinkac L.M."/>
            <person name="Beanan M.J."/>
            <person name="Dodson R.J."/>
            <person name="Daugherty S.C."/>
            <person name="Madupu R."/>
            <person name="Angiuoli S.V."/>
            <person name="Durkin A.S."/>
            <person name="Haft D.H."/>
            <person name="Vamathevan J.J."/>
            <person name="Khouri H."/>
            <person name="Utterback T.R."/>
            <person name="Lee C."/>
            <person name="Dimitrov G."/>
            <person name="Jiang L."/>
            <person name="Qin H."/>
            <person name="Weidman J."/>
            <person name="Tran K."/>
            <person name="Kang K.H."/>
            <person name="Hance I.R."/>
            <person name="Nelson K.E."/>
            <person name="Fraser C.M."/>
        </authorList>
    </citation>
    <scope>NUCLEOTIDE SEQUENCE [LARGE SCALE GENOMIC DNA]</scope>
    <source>
        <strain>ATCC 35984 / DSM 28319 / BCRC 17069 / CCUG 31568 / BM 3577 / RP62A</strain>
    </source>
</reference>
<sequence length="491" mass="55107">MNDHQKNHATSQDDNTKSTPSKNSKHIKIKLWHFILVILGIILLTSIITVVSTILISHQKSGLNKEQRANLKKIEYVYQTLNKDYYKKQSSDKLTQSAIDGMVKELKDPYSEYMTAEETKQFNEGVSGDFVGIGAEMQKKNEQISVTSPMKDSPAEKAGIQPKDIVTQVNHHSVVGKPLDQVVKMVRGKKGTYVTLTIKRGSQEKDIKIKRDTIHVKSVEYEKKGNVGVLTINKFQSNTSGELKSAIIKAHKQGIRHIILDLRNNPGGLLDEAVKMANIFIDKGNTVVQLEKGKDKEELKTSNQALKQAKDMKVSILVNEGSASASEVFTGAMKDYHKAKVYGSKTFGKGIVQTIREFSDGSLIKYTEMKWLTPDGHYIHGKGIRPDVSISTPKYQSLNVIPDNKTYHQGEKDKNVKTMKIGLKALGYPIDNETNIFDEQLESAIKTFQQDNNLKVNGNFDKKTNDKFTEKLVEKANKKDTVLNDLLNKLK</sequence>
<name>CTPAL_STAEQ</name>
<proteinExistence type="inferred from homology"/>
<feature type="chain" id="PRO_0000233195" description="Probable CtpA-like serine protease">
    <location>
        <begin position="1"/>
        <end position="491"/>
    </location>
</feature>
<feature type="transmembrane region" description="Helical" evidence="2">
    <location>
        <begin position="31"/>
        <end position="51"/>
    </location>
</feature>
<feature type="domain" description="PDZ" evidence="3">
    <location>
        <begin position="119"/>
        <end position="201"/>
    </location>
</feature>
<feature type="region of interest" description="Disordered" evidence="4">
    <location>
        <begin position="1"/>
        <end position="22"/>
    </location>
</feature>
<feature type="compositionally biased region" description="Polar residues" evidence="4">
    <location>
        <begin position="8"/>
        <end position="22"/>
    </location>
</feature>
<feature type="active site" description="Charge relay system" evidence="1">
    <location>
        <position position="324"/>
    </location>
</feature>
<feature type="active site" description="Charge relay system" evidence="1">
    <location>
        <position position="335"/>
    </location>
</feature>
<feature type="active site" description="Charge relay system" evidence="1">
    <location>
        <position position="349"/>
    </location>
</feature>
<accession>Q5HPB7</accession>
<gene>
    <name type="ordered locus">SERP0996</name>
</gene>
<organism>
    <name type="scientific">Staphylococcus epidermidis (strain ATCC 35984 / DSM 28319 / BCRC 17069 / CCUG 31568 / BM 3577 / RP62A)</name>
    <dbReference type="NCBI Taxonomy" id="176279"/>
    <lineage>
        <taxon>Bacteria</taxon>
        <taxon>Bacillati</taxon>
        <taxon>Bacillota</taxon>
        <taxon>Bacilli</taxon>
        <taxon>Bacillales</taxon>
        <taxon>Staphylococcaceae</taxon>
        <taxon>Staphylococcus</taxon>
    </lineage>
</organism>